<proteinExistence type="inferred from homology"/>
<comment type="function">
    <text evidence="1">Necessary for the introduction of cis unsaturation into fatty acids. Catalyzes the dehydration of (3R)-3-hydroxydecanoyl-ACP to E-(2)-decenoyl-ACP and then its isomerization to Z-(3)-decenoyl-ACP. Can catalyze the dehydratase reaction for beta-hydroxyacyl-ACPs with saturated chain lengths up to 16:0, being most active on intermediate chain length.</text>
</comment>
<comment type="catalytic activity">
    <reaction evidence="1">
        <text>a (3R)-hydroxyacyl-[ACP] = a (2E)-enoyl-[ACP] + H2O</text>
        <dbReference type="Rhea" id="RHEA:13097"/>
        <dbReference type="Rhea" id="RHEA-COMP:9925"/>
        <dbReference type="Rhea" id="RHEA-COMP:9945"/>
        <dbReference type="ChEBI" id="CHEBI:15377"/>
        <dbReference type="ChEBI" id="CHEBI:78784"/>
        <dbReference type="ChEBI" id="CHEBI:78827"/>
        <dbReference type="EC" id="4.2.1.59"/>
    </reaction>
</comment>
<comment type="catalytic activity">
    <reaction evidence="1">
        <text>(3R)-hydroxydecanoyl-[ACP] = (2E)-decenoyl-[ACP] + H2O</text>
        <dbReference type="Rhea" id="RHEA:41860"/>
        <dbReference type="Rhea" id="RHEA-COMP:9638"/>
        <dbReference type="Rhea" id="RHEA-COMP:9639"/>
        <dbReference type="ChEBI" id="CHEBI:15377"/>
        <dbReference type="ChEBI" id="CHEBI:78466"/>
        <dbReference type="ChEBI" id="CHEBI:78467"/>
    </reaction>
</comment>
<comment type="catalytic activity">
    <reaction evidence="1">
        <text>(2E)-decenoyl-[ACP] = (3Z)-decenoyl-[ACP]</text>
        <dbReference type="Rhea" id="RHEA:23568"/>
        <dbReference type="Rhea" id="RHEA-COMP:9639"/>
        <dbReference type="Rhea" id="RHEA-COMP:9927"/>
        <dbReference type="ChEBI" id="CHEBI:78467"/>
        <dbReference type="ChEBI" id="CHEBI:78798"/>
        <dbReference type="EC" id="5.3.3.14"/>
    </reaction>
</comment>
<comment type="pathway">
    <text evidence="1">Lipid metabolism; fatty acid biosynthesis.</text>
</comment>
<comment type="subunit">
    <text evidence="1">Homodimer.</text>
</comment>
<comment type="subcellular location">
    <subcellularLocation>
        <location evidence="1">Cytoplasm</location>
    </subcellularLocation>
</comment>
<comment type="similarity">
    <text evidence="1">Belongs to the thioester dehydratase family. FabA subfamily.</text>
</comment>
<dbReference type="EC" id="4.2.1.59" evidence="1"/>
<dbReference type="EC" id="5.3.3.14" evidence="1"/>
<dbReference type="EMBL" id="CP000238">
    <property type="protein sequence ID" value="ABF14315.1"/>
    <property type="molecule type" value="Genomic_DNA"/>
</dbReference>
<dbReference type="RefSeq" id="WP_011520586.1">
    <property type="nucleotide sequence ID" value="NC_007984.1"/>
</dbReference>
<dbReference type="SMR" id="Q1LT61"/>
<dbReference type="STRING" id="374463.BCI_0410"/>
<dbReference type="KEGG" id="bci:BCI_0410"/>
<dbReference type="HOGENOM" id="CLU_097925_0_0_6"/>
<dbReference type="OrthoDB" id="9786735at2"/>
<dbReference type="UniPathway" id="UPA00094"/>
<dbReference type="Proteomes" id="UP000002427">
    <property type="component" value="Chromosome"/>
</dbReference>
<dbReference type="GO" id="GO:0005737">
    <property type="term" value="C:cytoplasm"/>
    <property type="evidence" value="ECO:0007669"/>
    <property type="project" value="UniProtKB-SubCell"/>
</dbReference>
<dbReference type="GO" id="GO:0019171">
    <property type="term" value="F:(3R)-hydroxyacyl-[acyl-carrier-protein] dehydratase activity"/>
    <property type="evidence" value="ECO:0007669"/>
    <property type="project" value="UniProtKB-UniRule"/>
</dbReference>
<dbReference type="GO" id="GO:0034017">
    <property type="term" value="F:trans-2-decenoyl-acyl-carrier-protein isomerase activity"/>
    <property type="evidence" value="ECO:0007669"/>
    <property type="project" value="UniProtKB-UniRule"/>
</dbReference>
<dbReference type="GO" id="GO:0006636">
    <property type="term" value="P:unsaturated fatty acid biosynthetic process"/>
    <property type="evidence" value="ECO:0007669"/>
    <property type="project" value="UniProtKB-UniRule"/>
</dbReference>
<dbReference type="CDD" id="cd01287">
    <property type="entry name" value="FabA"/>
    <property type="match status" value="1"/>
</dbReference>
<dbReference type="Gene3D" id="3.10.129.10">
    <property type="entry name" value="Hotdog Thioesterase"/>
    <property type="match status" value="1"/>
</dbReference>
<dbReference type="HAMAP" id="MF_00405">
    <property type="entry name" value="FabA"/>
    <property type="match status" value="1"/>
</dbReference>
<dbReference type="InterPro" id="IPR010083">
    <property type="entry name" value="FabA"/>
</dbReference>
<dbReference type="InterPro" id="IPR013114">
    <property type="entry name" value="FabA_FabZ"/>
</dbReference>
<dbReference type="InterPro" id="IPR029069">
    <property type="entry name" value="HotDog_dom_sf"/>
</dbReference>
<dbReference type="NCBIfam" id="TIGR01749">
    <property type="entry name" value="fabA"/>
    <property type="match status" value="1"/>
</dbReference>
<dbReference type="NCBIfam" id="NF003509">
    <property type="entry name" value="PRK05174.1"/>
    <property type="match status" value="1"/>
</dbReference>
<dbReference type="PANTHER" id="PTHR30272">
    <property type="entry name" value="3-HYDROXYACYL-[ACYL-CARRIER-PROTEIN] DEHYDRATASE"/>
    <property type="match status" value="1"/>
</dbReference>
<dbReference type="PANTHER" id="PTHR30272:SF8">
    <property type="entry name" value="3-HYDROXYDECANOYL-[ACYL-CARRIER-PROTEIN] DEHYDRATASE"/>
    <property type="match status" value="1"/>
</dbReference>
<dbReference type="Pfam" id="PF07977">
    <property type="entry name" value="FabA"/>
    <property type="match status" value="1"/>
</dbReference>
<dbReference type="SUPFAM" id="SSF54637">
    <property type="entry name" value="Thioesterase/thiol ester dehydrase-isomerase"/>
    <property type="match status" value="1"/>
</dbReference>
<evidence type="ECO:0000255" key="1">
    <source>
        <dbReference type="HAMAP-Rule" id="MF_00405"/>
    </source>
</evidence>
<name>FABA_BAUCH</name>
<keyword id="KW-0963">Cytoplasm</keyword>
<keyword id="KW-0275">Fatty acid biosynthesis</keyword>
<keyword id="KW-0276">Fatty acid metabolism</keyword>
<keyword id="KW-0413">Isomerase</keyword>
<keyword id="KW-0444">Lipid biosynthesis</keyword>
<keyword id="KW-0443">Lipid metabolism</keyword>
<keyword id="KW-0456">Lyase</keyword>
<keyword id="KW-1185">Reference proteome</keyword>
<sequence>MIEKREFYSKEDLIASSRGELFGERGPQLPAHQMLMMDQVVKITKYGGHYNKGFMEAELDIKPDMWFFCCHFIGDPVMPGCLGLDAMWQLVGFYLGWIGGKGKGRALGVGEVKFIGQILPSAKKVTYRIHFRRIIHRQLLMGMADGEVICDGKIIYTATDLKVGLFQDPTILS</sequence>
<protein>
    <recommendedName>
        <fullName evidence="1">3-hydroxydecanoyl-[acyl-carrier-protein] dehydratase</fullName>
        <ecNumber evidence="1">4.2.1.59</ecNumber>
    </recommendedName>
    <alternativeName>
        <fullName evidence="1">3-hydroxyacyl-[acyl-carrier-protein] dehydratase FabA</fullName>
    </alternativeName>
    <alternativeName>
        <fullName evidence="1">Beta-hydroxydecanoyl thioester dehydrase</fullName>
    </alternativeName>
    <alternativeName>
        <fullName evidence="1">Trans-2-decenoyl-[acyl-carrier-protein] isomerase</fullName>
        <ecNumber evidence="1">5.3.3.14</ecNumber>
    </alternativeName>
</protein>
<accession>Q1LT61</accession>
<reference key="1">
    <citation type="journal article" date="2006" name="PLoS Biol.">
        <title>Metabolic complementarity and genomics of the dual bacterial symbiosis of sharpshooters.</title>
        <authorList>
            <person name="Wu D."/>
            <person name="Daugherty S.C."/>
            <person name="Van Aken S.E."/>
            <person name="Pai G.H."/>
            <person name="Watkins K.L."/>
            <person name="Khouri H."/>
            <person name="Tallon L.J."/>
            <person name="Zaborsky J.M."/>
            <person name="Dunbar H.E."/>
            <person name="Tran P.L."/>
            <person name="Moran N.A."/>
            <person name="Eisen J.A."/>
        </authorList>
    </citation>
    <scope>NUCLEOTIDE SEQUENCE [LARGE SCALE GENOMIC DNA]</scope>
</reference>
<feature type="chain" id="PRO_0000267721" description="3-hydroxydecanoyl-[acyl-carrier-protein] dehydratase">
    <location>
        <begin position="1"/>
        <end position="173"/>
    </location>
</feature>
<feature type="active site" evidence="1">
    <location>
        <position position="71"/>
    </location>
</feature>
<organism>
    <name type="scientific">Baumannia cicadellinicola subsp. Homalodisca coagulata</name>
    <dbReference type="NCBI Taxonomy" id="374463"/>
    <lineage>
        <taxon>Bacteria</taxon>
        <taxon>Pseudomonadati</taxon>
        <taxon>Pseudomonadota</taxon>
        <taxon>Gammaproteobacteria</taxon>
        <taxon>Candidatus Palibaumannia</taxon>
    </lineage>
</organism>
<gene>
    <name evidence="1" type="primary">fabA</name>
    <name type="ordered locus">BCI_0410</name>
</gene>